<evidence type="ECO:0000255" key="1">
    <source>
        <dbReference type="HAMAP-Rule" id="MF_00275"/>
    </source>
</evidence>
<accession>C1EYJ9</accession>
<sequence length="555" mass="59812">MIWVAVVITMLLFILVAKPTGIYLEKAFQGSKKLDKVFGPFEKLIFKITGVKEYNQTWKQYALSLVLLNGFMIVVVYFIFRLQGVLPLNPAHIEGMEPTLAFNTAISFMADTNLQHYSGENGLSYLSQLIGITFLMFAAPATTLALVMAFIRGLAGKELGNFFVDFTRALTRVFLPIAFIAALVFVALGVPQTLDGAVTAQTIDGAKQSILRGPVASFISIKELGNNGGGFFGANSTHPFENPGQMSNILQMMLMMLLPTALPFTYGRMVGNKKQGRILFVSLFMVFLLGFITITTSELHGNPALNGMGIEHVQGSTEGKEVRFGTVFSSLYATVTTAAETGAVNTMHDTLTPIGGLVPLVNMMLNTVYGGVGAGFVNIIMYAIIAVFISGLMVGRTPEFLGKKIEGKEMKLIAVTILFHPLLILGFSALALSTSLGTDAISHSGFHGLTQVVYEYTSSAANNGSGFEGLADNTPFWNITTGLVMFLGRYFSLITMLAVAASLKEKTVVPETVGTFRTDNSLFGGIFIGTIVIVGALTFFPMLVLGPIAEFLTLK</sequence>
<gene>
    <name evidence="1" type="primary">kdpA</name>
    <name type="ordered locus">BCA_0803</name>
</gene>
<protein>
    <recommendedName>
        <fullName evidence="1">Potassium-transporting ATPase potassium-binding subunit</fullName>
    </recommendedName>
    <alternativeName>
        <fullName evidence="1">ATP phosphohydrolase [potassium-transporting] A chain</fullName>
    </alternativeName>
    <alternativeName>
        <fullName evidence="1">Potassium-binding and translocating subunit A</fullName>
    </alternativeName>
    <alternativeName>
        <fullName evidence="1">Potassium-translocating ATPase A chain</fullName>
    </alternativeName>
</protein>
<reference key="1">
    <citation type="submission" date="2009-02" db="EMBL/GenBank/DDBJ databases">
        <title>Genome sequence of Bacillus cereus 03BB102.</title>
        <authorList>
            <person name="Dodson R.J."/>
            <person name="Jackson P."/>
            <person name="Munk A.C."/>
            <person name="Brettin T."/>
            <person name="Bruce D."/>
            <person name="Detter C."/>
            <person name="Tapia R."/>
            <person name="Han C."/>
            <person name="Sutton G."/>
            <person name="Sims D."/>
        </authorList>
    </citation>
    <scope>NUCLEOTIDE SEQUENCE [LARGE SCALE GENOMIC DNA]</scope>
    <source>
        <strain>03BB102</strain>
    </source>
</reference>
<feature type="chain" id="PRO_1000190731" description="Potassium-transporting ATPase potassium-binding subunit">
    <location>
        <begin position="1"/>
        <end position="555"/>
    </location>
</feature>
<feature type="transmembrane region" description="Helical" evidence="1">
    <location>
        <begin position="2"/>
        <end position="22"/>
    </location>
</feature>
<feature type="transmembrane region" description="Helical" evidence="1">
    <location>
        <begin position="60"/>
        <end position="80"/>
    </location>
</feature>
<feature type="transmembrane region" description="Helical" evidence="1">
    <location>
        <begin position="130"/>
        <end position="150"/>
    </location>
</feature>
<feature type="transmembrane region" description="Helical" evidence="1">
    <location>
        <begin position="173"/>
        <end position="193"/>
    </location>
</feature>
<feature type="transmembrane region" description="Helical" evidence="1">
    <location>
        <begin position="246"/>
        <end position="266"/>
    </location>
</feature>
<feature type="transmembrane region" description="Helical" evidence="1">
    <location>
        <begin position="278"/>
        <end position="298"/>
    </location>
</feature>
<feature type="transmembrane region" description="Helical" evidence="1">
    <location>
        <begin position="374"/>
        <end position="394"/>
    </location>
</feature>
<feature type="transmembrane region" description="Helical" evidence="1">
    <location>
        <begin position="412"/>
        <end position="432"/>
    </location>
</feature>
<feature type="transmembrane region" description="Helical" evidence="1">
    <location>
        <begin position="483"/>
        <end position="503"/>
    </location>
</feature>
<feature type="transmembrane region" description="Helical" evidence="1">
    <location>
        <begin position="525"/>
        <end position="545"/>
    </location>
</feature>
<keyword id="KW-1003">Cell membrane</keyword>
<keyword id="KW-0406">Ion transport</keyword>
<keyword id="KW-0472">Membrane</keyword>
<keyword id="KW-0630">Potassium</keyword>
<keyword id="KW-0633">Potassium transport</keyword>
<keyword id="KW-0812">Transmembrane</keyword>
<keyword id="KW-1133">Transmembrane helix</keyword>
<keyword id="KW-0813">Transport</keyword>
<name>KDPA_BACC3</name>
<organism>
    <name type="scientific">Bacillus cereus (strain 03BB102)</name>
    <dbReference type="NCBI Taxonomy" id="572264"/>
    <lineage>
        <taxon>Bacteria</taxon>
        <taxon>Bacillati</taxon>
        <taxon>Bacillota</taxon>
        <taxon>Bacilli</taxon>
        <taxon>Bacillales</taxon>
        <taxon>Bacillaceae</taxon>
        <taxon>Bacillus</taxon>
        <taxon>Bacillus cereus group</taxon>
    </lineage>
</organism>
<dbReference type="EMBL" id="CP001407">
    <property type="protein sequence ID" value="ACO31176.1"/>
    <property type="molecule type" value="Genomic_DNA"/>
</dbReference>
<dbReference type="RefSeq" id="WP_000638347.1">
    <property type="nucleotide sequence ID" value="NC_012472.1"/>
</dbReference>
<dbReference type="SMR" id="C1EYJ9"/>
<dbReference type="KEGG" id="bcx:BCA_0803"/>
<dbReference type="PATRIC" id="fig|572264.18.peg.747"/>
<dbReference type="Proteomes" id="UP000002210">
    <property type="component" value="Chromosome"/>
</dbReference>
<dbReference type="GO" id="GO:0005886">
    <property type="term" value="C:plasma membrane"/>
    <property type="evidence" value="ECO:0007669"/>
    <property type="project" value="UniProtKB-SubCell"/>
</dbReference>
<dbReference type="GO" id="GO:0008556">
    <property type="term" value="F:P-type potassium transmembrane transporter activity"/>
    <property type="evidence" value="ECO:0007669"/>
    <property type="project" value="InterPro"/>
</dbReference>
<dbReference type="GO" id="GO:0030955">
    <property type="term" value="F:potassium ion binding"/>
    <property type="evidence" value="ECO:0007669"/>
    <property type="project" value="UniProtKB-UniRule"/>
</dbReference>
<dbReference type="HAMAP" id="MF_00275">
    <property type="entry name" value="KdpA"/>
    <property type="match status" value="1"/>
</dbReference>
<dbReference type="InterPro" id="IPR004623">
    <property type="entry name" value="KdpA"/>
</dbReference>
<dbReference type="NCBIfam" id="TIGR00680">
    <property type="entry name" value="kdpA"/>
    <property type="match status" value="1"/>
</dbReference>
<dbReference type="PANTHER" id="PTHR30607">
    <property type="entry name" value="POTASSIUM-TRANSPORTING ATPASE A CHAIN"/>
    <property type="match status" value="1"/>
</dbReference>
<dbReference type="PANTHER" id="PTHR30607:SF2">
    <property type="entry name" value="POTASSIUM-TRANSPORTING ATPASE POTASSIUM-BINDING SUBUNIT"/>
    <property type="match status" value="1"/>
</dbReference>
<dbReference type="Pfam" id="PF03814">
    <property type="entry name" value="KdpA"/>
    <property type="match status" value="1"/>
</dbReference>
<dbReference type="PIRSF" id="PIRSF001294">
    <property type="entry name" value="K_ATPaseA"/>
    <property type="match status" value="1"/>
</dbReference>
<proteinExistence type="inferred from homology"/>
<comment type="function">
    <text evidence="1">Part of the high-affinity ATP-driven potassium transport (or Kdp) system, which catalyzes the hydrolysis of ATP coupled with the electrogenic transport of potassium into the cytoplasm. This subunit binds the extracellular potassium ions and delivers the ions to the membrane domain of KdpB through an intramembrane tunnel.</text>
</comment>
<comment type="subunit">
    <text evidence="1">The system is composed of three essential subunits: KdpA, KdpB and KdpC.</text>
</comment>
<comment type="subcellular location">
    <subcellularLocation>
        <location evidence="1">Cell membrane</location>
        <topology evidence="1">Multi-pass membrane protein</topology>
    </subcellularLocation>
</comment>
<comment type="similarity">
    <text evidence="1">Belongs to the KdpA family.</text>
</comment>